<sequence length="95" mass="10724">MASETVANHQEKALALLQADAEKILRLIKVQMDHLTMPQCPLYEEVLDTQMFGLSREVDFAVRLGLIAEEQGKAMLGELERELSALHEAFTNKQQ</sequence>
<proteinExistence type="inferred from homology"/>
<gene>
    <name type="ordered locus">BCG9842_B1188</name>
</gene>
<dbReference type="EMBL" id="CP001186">
    <property type="protein sequence ID" value="ACK93524.1"/>
    <property type="molecule type" value="Genomic_DNA"/>
</dbReference>
<dbReference type="RefSeq" id="WP_000135694.1">
    <property type="nucleotide sequence ID" value="NC_011772.1"/>
</dbReference>
<dbReference type="SMR" id="B7IVI6"/>
<dbReference type="KEGG" id="bcg:BCG9842_B1188"/>
<dbReference type="HOGENOM" id="CLU_160493_1_0_9"/>
<dbReference type="Proteomes" id="UP000006744">
    <property type="component" value="Chromosome"/>
</dbReference>
<dbReference type="Gene3D" id="1.10.287.750">
    <property type="entry name" value="SO2669-like"/>
    <property type="match status" value="1"/>
</dbReference>
<dbReference type="HAMAP" id="MF_01560">
    <property type="entry name" value="UPF0358"/>
    <property type="match status" value="1"/>
</dbReference>
<dbReference type="InterPro" id="IPR009983">
    <property type="entry name" value="UPF0358"/>
</dbReference>
<dbReference type="InterPro" id="IPR036270">
    <property type="entry name" value="UPF0358_sf"/>
</dbReference>
<dbReference type="NCBIfam" id="NF010187">
    <property type="entry name" value="PRK13666.1"/>
    <property type="match status" value="1"/>
</dbReference>
<dbReference type="Pfam" id="PF07408">
    <property type="entry name" value="DUF1507"/>
    <property type="match status" value="1"/>
</dbReference>
<dbReference type="SUPFAM" id="SSF140404">
    <property type="entry name" value="EF2458-like"/>
    <property type="match status" value="1"/>
</dbReference>
<protein>
    <recommendedName>
        <fullName evidence="1">UPF0358 protein BCG9842_B1188</fullName>
    </recommendedName>
</protein>
<reference key="1">
    <citation type="submission" date="2008-10" db="EMBL/GenBank/DDBJ databases">
        <title>Genome sequence of Bacillus cereus G9842.</title>
        <authorList>
            <person name="Dodson R.J."/>
            <person name="Durkin A.S."/>
            <person name="Rosovitz M.J."/>
            <person name="Rasko D.A."/>
            <person name="Hoffmaster A."/>
            <person name="Ravel J."/>
            <person name="Sutton G."/>
        </authorList>
    </citation>
    <scope>NUCLEOTIDE SEQUENCE [LARGE SCALE GENOMIC DNA]</scope>
    <source>
        <strain>G9842</strain>
    </source>
</reference>
<name>Y1188_BACC2</name>
<feature type="chain" id="PRO_1000199629" description="UPF0358 protein BCG9842_B1188">
    <location>
        <begin position="1"/>
        <end position="95"/>
    </location>
</feature>
<accession>B7IVI6</accession>
<evidence type="ECO:0000255" key="1">
    <source>
        <dbReference type="HAMAP-Rule" id="MF_01560"/>
    </source>
</evidence>
<comment type="similarity">
    <text evidence="1">Belongs to the UPF0358 family.</text>
</comment>
<organism>
    <name type="scientific">Bacillus cereus (strain G9842)</name>
    <dbReference type="NCBI Taxonomy" id="405531"/>
    <lineage>
        <taxon>Bacteria</taxon>
        <taxon>Bacillati</taxon>
        <taxon>Bacillota</taxon>
        <taxon>Bacilli</taxon>
        <taxon>Bacillales</taxon>
        <taxon>Bacillaceae</taxon>
        <taxon>Bacillus</taxon>
        <taxon>Bacillus cereus group</taxon>
    </lineage>
</organism>